<name>SC5A6_HUMAN</name>
<gene>
    <name evidence="23" type="primary">SLC5A6</name>
    <name type="synonym">SMVT</name>
</gene>
<accession>Q9Y289</accession>
<accession>B2RB85</accession>
<accession>D6W549</accession>
<accession>Q969Y5</accession>
<sequence>MSVGVSTSAPLSPTSGTSVGMSTFSIMDYVVFVLLLVLSLAIGLYHACRGWGRHTVGELLMADRKMGCLPVALSLLATFQSAVAILGVPSEIYRFGTQYWFLGCCYFLGLLIPAHIFIPVFYRLHLTSAYEYLELRFNKTVRVCGTVTFIFQMVIYMGVVLYAPSLALNAVTGFDLWLSVLALGIVCTVYTALGGLKAVIWTDVFQTLVMFLGQLAVIIVGSAKVGGLGRVWAVASQHGRISGFELDPDPFVRHTFWTLAFGGVFMMLSLYGVNQAQVQRYLSSRTEKAAVLSCYAVFPFQQVSLCVGCLIGLVMFAYYQEYPMSIQQAQAAPDQFVLYFVMDLLKGLPGLPGLFIACLFSGSLSTISSAFNSLATVTMEDLIRPWFPEFSEARAIMLSRGLAFGYGLLCLGMAYISSQMGPVLQAAISIFGMVGGPLLGLFCLGMFFPCANPPGAVVGLLAGLVMAFWIGIGSIVTSMGSSMPPSPSNGSSFSLPTNLTVATVTTLMPLTTFSKPTGLQRFYSLSYLWYSAHNSTTVIVVGLIVSLLTGRMRGRSLNPATIYPVLPKLLSLLPLSCQKRLHCRSYGQDHLDTGLFPEKPRNGVLGDSRDKEAMALDGTAYQGSSSTCILQETSL</sequence>
<proteinExistence type="evidence at protein level"/>
<comment type="function">
    <text evidence="1 3 6 7 8 10 11 12 13 14 15 16">Sodium-dependent multivitamin transporter that mediates the electrogenic transport of pantothenate, biotin, lipoate and iodide (PubMed:10329687, PubMed:15561972, PubMed:19211916, PubMed:20980265, PubMed:21570947, PubMed:22015582, PubMed:25809983, PubMed:25971966, PubMed:27904971, PubMed:28052864, PubMed:31754459). Functions as a Na(+)-coupled substrate symporter where the stoichiometry of Na(+):substrate is 2:1, creating an electrochemical Na(+) gradient used as driving force for substrate uptake (PubMed:10329687, PubMed:20980265). Required for biotin and pantothenate uptake in the intestine across the brush border membrane (PubMed:19211916). Plays a role in the maintenance of intestinal mucosa integrity, by providing the gut mucosa with biotin (By similarity). Contributes to the luminal uptake of biotin and pantothenate into the brain across the blood-brain barrier (PubMed:25809983).</text>
</comment>
<comment type="catalytic activity">
    <reaction evidence="3 6 7 8 10 11 12 14 15 16">
        <text>biotin(out) + 2 Na(+)(out) = biotin(in) + 2 Na(+)(in)</text>
        <dbReference type="Rhea" id="RHEA:73375"/>
        <dbReference type="ChEBI" id="CHEBI:29101"/>
        <dbReference type="ChEBI" id="CHEBI:57586"/>
    </reaction>
</comment>
<comment type="catalytic activity">
    <reaction evidence="3 12">
        <text>(R)-pantothenate(out) + 2 Na(+)(out) = (R)-pantothenate(in) + 2 Na(+)(in)</text>
        <dbReference type="Rhea" id="RHEA:73371"/>
        <dbReference type="ChEBI" id="CHEBI:29032"/>
        <dbReference type="ChEBI" id="CHEBI:29101"/>
    </reaction>
</comment>
<comment type="catalytic activity">
    <reaction evidence="8 13">
        <text>(R)-lipoate(out) + 2 Na(+)(out) = (R)-lipoate(in) + 2 Na(+)(in)</text>
        <dbReference type="Rhea" id="RHEA:73379"/>
        <dbReference type="ChEBI" id="CHEBI:29101"/>
        <dbReference type="ChEBI" id="CHEBI:83088"/>
    </reaction>
</comment>
<comment type="catalytic activity">
    <reaction evidence="8">
        <text>iodide(out) + 2 Na(+)(out) = iodide(in) + 2 Na(+)(in)</text>
        <dbReference type="Rhea" id="RHEA:71207"/>
        <dbReference type="ChEBI" id="CHEBI:16382"/>
        <dbReference type="ChEBI" id="CHEBI:29101"/>
    </reaction>
</comment>
<comment type="biophysicochemical properties">
    <kinetics>
        <KM evidence="10">18.91 uM for biotin (in retinal pigment epithelial cells at 37 degrees Celsius)</KM>
        <KM evidence="11">14.28 uM for biotin</KM>
        <KM evidence="13">4 uM for lipoate</KM>
        <Vmax evidence="10">0.0967 pmol/min/mg enzyme for biotin uptake (in retinal pigment epithelial cells at 37 degrees Celsius)</Vmax>
    </kinetics>
</comment>
<comment type="subunit">
    <text evidence="9">Interacts with PDZD11.</text>
</comment>
<comment type="interaction">
    <interactant intactId="EBI-3915941">
        <id>Q9Y289</id>
    </interactant>
    <interactant intactId="EBI-1644207">
        <id>Q5EBL8</id>
        <label>PDZD11</label>
    </interactant>
    <organismsDiffer>false</organismsDiffer>
    <experiments>6</experiments>
</comment>
<comment type="subcellular location">
    <subcellularLocation>
        <location evidence="12 14 17">Cell membrane</location>
        <topology evidence="2">Multi-pass membrane protein</topology>
    </subcellularLocation>
    <subcellularLocation>
        <location evidence="7">Apical cell membrane</location>
        <topology evidence="2">Multi-pass membrane protein</topology>
    </subcellularLocation>
    <text evidence="7 12">Preferentially localized at the luminal membrane of brain capillary endothelium (PubMed:25809983). Localized to the brush border/apical membrane of intestine and renal polarized cells (PubMed:19211916).</text>
</comment>
<comment type="subcellular location">
    <subcellularLocation>
        <location evidence="15">Cell membrane</location>
        <topology evidence="2">Multi-pass membrane protein</topology>
    </subcellularLocation>
    <text evidence="15">(Microbial infection) Exposure to E.coli lipopolysaccharides leads to reduced cell membrane localization.</text>
</comment>
<comment type="tissue specificity">
    <text evidence="3 12">Expressed in microvessels of the brain (at protein level) (PubMed:25809983). Expressed in heart, brain, placenta, lung, liver, skeletal muscle, kidney, and pancreas (PubMed:10329687).</text>
</comment>
<comment type="domain">
    <text evidence="7">The C-terminal tail is important for biotin uptake as well as apical localization in polarized cells.</text>
</comment>
<comment type="PTM">
    <text evidence="10">May be glycosylated.</text>
</comment>
<comment type="disease" evidence="14 16">
    <disease id="DI-05892">
        <name>Sodium-dependent multivitamin transporter deficiency</name>
        <acronym>SMVTD</acronym>
        <description>An autosomal recessive multisystemic metabolic disorder characterized by early infantile onset, progressive neurodegeneration, global developmental delay, and developmental regression with loss of early motor and cognitive milestones. Additional variable features include seizures, ataxia, spasticity, peripheral neuropathy, immune defects, and osteopenia. Treatment with biotin, pantothenic acid, and lipoate may result in clinical improvement.</description>
        <dbReference type="MIM" id="618973"/>
    </disease>
    <text>The disease is caused by variants affecting the gene represented in this entry.</text>
</comment>
<comment type="disease" evidence="17">
    <disease id="DI-06441">
        <name>Peripheral motor neuropathy, childhood-onset, biotin-responsive</name>
        <acronym>COMNB</acronym>
        <description>An autosomal recessive disorder characterized by distal muscle weakness and atrophy appearing late in the first decade of life. The disorder predominantly affects the upper limbs and hands, resulting in difficulties with fine motor skills. Some patients may have lower limb involvement, resulting in gait difficulties. Additional features may include spasticity, ataxia, and cerebellar signs. Sensation is intact, and patients have normal cognitive development. Treatment with biotin, pantothenic acid, and lipoic acid may result in clinical improvement.</description>
        <dbReference type="MIM" id="619903"/>
    </disease>
    <text>The disease is caused by variants affecting the gene represented in this entry.</text>
</comment>
<comment type="similarity">
    <text evidence="22">Belongs to the sodium:solute symporter (SSF) (TC 2.A.21) family.</text>
</comment>
<protein>
    <recommendedName>
        <fullName evidence="21">Sodium-dependent multivitamin transporter</fullName>
        <shortName evidence="19">Na(+)-dependent multivitamin transporter</shortName>
        <shortName evidence="20">hSMVT</shortName>
    </recommendedName>
    <alternativeName>
        <fullName>Solute carrier family 5 member 6</fullName>
    </alternativeName>
</protein>
<dbReference type="EMBL" id="AF116241">
    <property type="protein sequence ID" value="AAD37502.1"/>
    <property type="molecule type" value="Genomic_DNA"/>
</dbReference>
<dbReference type="EMBL" id="AF069307">
    <property type="protein sequence ID" value="AAD31727.1"/>
    <property type="molecule type" value="mRNA"/>
</dbReference>
<dbReference type="EMBL" id="AF081571">
    <property type="protein sequence ID" value="AAD37481.1"/>
    <property type="molecule type" value="mRNA"/>
</dbReference>
<dbReference type="EMBL" id="AK314545">
    <property type="protein sequence ID" value="BAG37132.1"/>
    <property type="molecule type" value="mRNA"/>
</dbReference>
<dbReference type="EMBL" id="AC013403">
    <property type="protein sequence ID" value="AAX93172.1"/>
    <property type="molecule type" value="Genomic_DNA"/>
</dbReference>
<dbReference type="EMBL" id="CH471053">
    <property type="protein sequence ID" value="EAX00620.1"/>
    <property type="molecule type" value="Genomic_DNA"/>
</dbReference>
<dbReference type="EMBL" id="CH471053">
    <property type="protein sequence ID" value="EAX00621.1"/>
    <property type="molecule type" value="Genomic_DNA"/>
</dbReference>
<dbReference type="EMBL" id="CH471053">
    <property type="protein sequence ID" value="EAX00622.1"/>
    <property type="molecule type" value="Genomic_DNA"/>
</dbReference>
<dbReference type="EMBL" id="BC012806">
    <property type="protein sequence ID" value="AAH12806.1"/>
    <property type="molecule type" value="mRNA"/>
</dbReference>
<dbReference type="EMBL" id="BC015631">
    <property type="protein sequence ID" value="AAH15631.1"/>
    <property type="molecule type" value="mRNA"/>
</dbReference>
<dbReference type="CCDS" id="CCDS1740.1"/>
<dbReference type="RefSeq" id="NP_066918.2">
    <property type="nucleotide sequence ID" value="NM_021095.4"/>
</dbReference>
<dbReference type="RefSeq" id="XP_006712191.1">
    <property type="nucleotide sequence ID" value="XM_006712128.3"/>
</dbReference>
<dbReference type="RefSeq" id="XP_006712192.1">
    <property type="nucleotide sequence ID" value="XM_006712129.2"/>
</dbReference>
<dbReference type="RefSeq" id="XP_006712193.1">
    <property type="nucleotide sequence ID" value="XM_006712130.2"/>
</dbReference>
<dbReference type="RefSeq" id="XP_047302199.1">
    <property type="nucleotide sequence ID" value="XM_047446243.1"/>
</dbReference>
<dbReference type="RefSeq" id="XP_054200377.1">
    <property type="nucleotide sequence ID" value="XM_054344402.1"/>
</dbReference>
<dbReference type="RefSeq" id="XP_054200378.1">
    <property type="nucleotide sequence ID" value="XM_054344403.1"/>
</dbReference>
<dbReference type="RefSeq" id="XP_054200379.1">
    <property type="nucleotide sequence ID" value="XM_054344404.1"/>
</dbReference>
<dbReference type="RefSeq" id="XP_054200380.1">
    <property type="nucleotide sequence ID" value="XM_054344405.1"/>
</dbReference>
<dbReference type="SMR" id="Q9Y289"/>
<dbReference type="BioGRID" id="114403">
    <property type="interactions" value="276"/>
</dbReference>
<dbReference type="FunCoup" id="Q9Y289">
    <property type="interactions" value="141"/>
</dbReference>
<dbReference type="IntAct" id="Q9Y289">
    <property type="interactions" value="65"/>
</dbReference>
<dbReference type="MINT" id="Q9Y289"/>
<dbReference type="STRING" id="9606.ENSP00000310208"/>
<dbReference type="DrugBank" id="DB00121">
    <property type="generic name" value="Biotin"/>
</dbReference>
<dbReference type="DrugBank" id="DB08872">
    <property type="generic name" value="Gabapentin enacarbil"/>
</dbReference>
<dbReference type="DrugBank" id="DB00166">
    <property type="generic name" value="Lipoic acid"/>
</dbReference>
<dbReference type="TCDB" id="2.A.21.5.7">
    <property type="family name" value="the solute:sodium symporter (sss) family"/>
</dbReference>
<dbReference type="GlyCosmos" id="Q9Y289">
    <property type="glycosylation" value="3 sites, No reported glycans"/>
</dbReference>
<dbReference type="GlyGen" id="Q9Y289">
    <property type="glycosylation" value="5 sites, 1 O-linked glycan (1 site)"/>
</dbReference>
<dbReference type="iPTMnet" id="Q9Y289"/>
<dbReference type="PhosphoSitePlus" id="Q9Y289"/>
<dbReference type="SwissPalm" id="Q9Y289"/>
<dbReference type="BioMuta" id="SLC5A6"/>
<dbReference type="DMDM" id="229462745"/>
<dbReference type="jPOST" id="Q9Y289"/>
<dbReference type="MassIVE" id="Q9Y289"/>
<dbReference type="PaxDb" id="9606-ENSP00000310208"/>
<dbReference type="PeptideAtlas" id="Q9Y289"/>
<dbReference type="ProteomicsDB" id="85700"/>
<dbReference type="Pumba" id="Q9Y289"/>
<dbReference type="Antibodypedia" id="52501">
    <property type="antibodies" value="189 antibodies from 29 providers"/>
</dbReference>
<dbReference type="DNASU" id="8884"/>
<dbReference type="Ensembl" id="ENST00000310574.8">
    <property type="protein sequence ID" value="ENSP00000310208.3"/>
    <property type="gene ID" value="ENSG00000138074.15"/>
</dbReference>
<dbReference type="Ensembl" id="ENST00000408041.5">
    <property type="protein sequence ID" value="ENSP00000384853.1"/>
    <property type="gene ID" value="ENSG00000138074.15"/>
</dbReference>
<dbReference type="GeneID" id="8884"/>
<dbReference type="KEGG" id="hsa:8884"/>
<dbReference type="MANE-Select" id="ENST00000310574.8">
    <property type="protein sequence ID" value="ENSP00000310208.3"/>
    <property type="RefSeq nucleotide sequence ID" value="NM_021095.4"/>
    <property type="RefSeq protein sequence ID" value="NP_066918.2"/>
</dbReference>
<dbReference type="UCSC" id="uc002rjd.4">
    <property type="organism name" value="human"/>
</dbReference>
<dbReference type="AGR" id="HGNC:11041"/>
<dbReference type="CTD" id="8884"/>
<dbReference type="DisGeNET" id="8884"/>
<dbReference type="GeneCards" id="SLC5A6"/>
<dbReference type="HGNC" id="HGNC:11041">
    <property type="gene designation" value="SLC5A6"/>
</dbReference>
<dbReference type="HPA" id="ENSG00000138074">
    <property type="expression patterns" value="Tissue enhanced (liver)"/>
</dbReference>
<dbReference type="MalaCards" id="SLC5A6"/>
<dbReference type="MIM" id="604024">
    <property type="type" value="gene"/>
</dbReference>
<dbReference type="MIM" id="618973">
    <property type="type" value="phenotype"/>
</dbReference>
<dbReference type="MIM" id="619903">
    <property type="type" value="phenotype"/>
</dbReference>
<dbReference type="neXtProt" id="NX_Q9Y289"/>
<dbReference type="OpenTargets" id="ENSG00000138074"/>
<dbReference type="PharmGKB" id="PA379"/>
<dbReference type="VEuPathDB" id="HostDB:ENSG00000138074"/>
<dbReference type="eggNOG" id="KOG2349">
    <property type="taxonomic scope" value="Eukaryota"/>
</dbReference>
<dbReference type="GeneTree" id="ENSGT00940000155731"/>
<dbReference type="HOGENOM" id="CLU_018808_11_1_1"/>
<dbReference type="InParanoid" id="Q9Y289"/>
<dbReference type="OMA" id="GWWGMRR"/>
<dbReference type="OrthoDB" id="6132759at2759"/>
<dbReference type="PAN-GO" id="Q9Y289">
    <property type="GO annotations" value="4 GO annotations based on evolutionary models"/>
</dbReference>
<dbReference type="PhylomeDB" id="Q9Y289"/>
<dbReference type="TreeFam" id="TF316728"/>
<dbReference type="PathwayCommons" id="Q9Y289"/>
<dbReference type="Reactome" id="R-HSA-196780">
    <property type="pathway name" value="Biotin transport and metabolism"/>
</dbReference>
<dbReference type="Reactome" id="R-HSA-199220">
    <property type="pathway name" value="Vitamin B5 (pantothenate) metabolism"/>
</dbReference>
<dbReference type="Reactome" id="R-HSA-425397">
    <property type="pathway name" value="Transport of vitamins, nucleosides, and related molecules"/>
</dbReference>
<dbReference type="SignaLink" id="Q9Y289"/>
<dbReference type="BioGRID-ORCS" id="8884">
    <property type="hits" value="10 hits in 1155 CRISPR screens"/>
</dbReference>
<dbReference type="ChiTaRS" id="SLC5A6">
    <property type="organism name" value="human"/>
</dbReference>
<dbReference type="GeneWiki" id="SLC5A6"/>
<dbReference type="GenomeRNAi" id="8884"/>
<dbReference type="Pharos" id="Q9Y289">
    <property type="development level" value="Tbio"/>
</dbReference>
<dbReference type="PRO" id="PR:Q9Y289"/>
<dbReference type="Proteomes" id="UP000005640">
    <property type="component" value="Chromosome 2"/>
</dbReference>
<dbReference type="RNAct" id="Q9Y289">
    <property type="molecule type" value="protein"/>
</dbReference>
<dbReference type="Bgee" id="ENSG00000138074">
    <property type="expression patterns" value="Expressed in right lobe of liver and 143 other cell types or tissues"/>
</dbReference>
<dbReference type="ExpressionAtlas" id="Q9Y289">
    <property type="expression patterns" value="baseline and differential"/>
</dbReference>
<dbReference type="GO" id="GO:0016324">
    <property type="term" value="C:apical plasma membrane"/>
    <property type="evidence" value="ECO:0000314"/>
    <property type="project" value="UniProtKB"/>
</dbReference>
<dbReference type="GO" id="GO:0009925">
    <property type="term" value="C:basal plasma membrane"/>
    <property type="evidence" value="ECO:0000250"/>
    <property type="project" value="ARUK-UCL"/>
</dbReference>
<dbReference type="GO" id="GO:0016323">
    <property type="term" value="C:basolateral plasma membrane"/>
    <property type="evidence" value="ECO:0000250"/>
    <property type="project" value="ARUK-UCL"/>
</dbReference>
<dbReference type="GO" id="GO:0031526">
    <property type="term" value="C:brush border membrane"/>
    <property type="evidence" value="ECO:0007669"/>
    <property type="project" value="Ensembl"/>
</dbReference>
<dbReference type="GO" id="GO:0016020">
    <property type="term" value="C:membrane"/>
    <property type="evidence" value="ECO:0000304"/>
    <property type="project" value="ProtInc"/>
</dbReference>
<dbReference type="GO" id="GO:0005886">
    <property type="term" value="C:plasma membrane"/>
    <property type="evidence" value="ECO:0000314"/>
    <property type="project" value="UniProtKB"/>
</dbReference>
<dbReference type="GO" id="GO:0015225">
    <property type="term" value="F:biotin transmembrane transporter activity"/>
    <property type="evidence" value="ECO:0000314"/>
    <property type="project" value="UniProtKB"/>
</dbReference>
<dbReference type="GO" id="GO:0015111">
    <property type="term" value="F:iodide transmembrane transporter activity"/>
    <property type="evidence" value="ECO:0000314"/>
    <property type="project" value="UniProtKB"/>
</dbReference>
<dbReference type="GO" id="GO:0140161">
    <property type="term" value="F:monocarboxylate:sodium symporter activity"/>
    <property type="evidence" value="ECO:0007669"/>
    <property type="project" value="Ensembl"/>
</dbReference>
<dbReference type="GO" id="GO:0015233">
    <property type="term" value="F:pantothenate transmembrane transporter activity"/>
    <property type="evidence" value="ECO:0000314"/>
    <property type="project" value="UniProtKB"/>
</dbReference>
<dbReference type="GO" id="GO:0015498">
    <property type="term" value="F:pantothenate:sodium symporter activity"/>
    <property type="evidence" value="ECO:0007669"/>
    <property type="project" value="Ensembl"/>
</dbReference>
<dbReference type="GO" id="GO:0008523">
    <property type="term" value="F:sodium-dependent multivitamin transmembrane transporter activity"/>
    <property type="evidence" value="ECO:0000318"/>
    <property type="project" value="GO_Central"/>
</dbReference>
<dbReference type="GO" id="GO:0090482">
    <property type="term" value="F:vitamin transmembrane transporter activity"/>
    <property type="evidence" value="ECO:0000314"/>
    <property type="project" value="UniProtKB"/>
</dbReference>
<dbReference type="GO" id="GO:1905135">
    <property type="term" value="P:biotin import across plasma membrane"/>
    <property type="evidence" value="ECO:0000314"/>
    <property type="project" value="UniProtKB"/>
</dbReference>
<dbReference type="GO" id="GO:0006768">
    <property type="term" value="P:biotin metabolic process"/>
    <property type="evidence" value="ECO:0007669"/>
    <property type="project" value="Ensembl"/>
</dbReference>
<dbReference type="GO" id="GO:0015878">
    <property type="term" value="P:biotin transport"/>
    <property type="evidence" value="ECO:0000314"/>
    <property type="project" value="UniProtKB"/>
</dbReference>
<dbReference type="GO" id="GO:1904200">
    <property type="term" value="P:iodide transmembrane transport"/>
    <property type="evidence" value="ECO:0000314"/>
    <property type="project" value="UniProtKB"/>
</dbReference>
<dbReference type="GO" id="GO:0015887">
    <property type="term" value="P:pantothenate transmembrane transport"/>
    <property type="evidence" value="ECO:0000314"/>
    <property type="project" value="UniProtKB"/>
</dbReference>
<dbReference type="GO" id="GO:0006814">
    <property type="term" value="P:sodium ion transport"/>
    <property type="evidence" value="ECO:0000318"/>
    <property type="project" value="GO_Central"/>
</dbReference>
<dbReference type="GO" id="GO:0150104">
    <property type="term" value="P:transport across blood-brain barrier"/>
    <property type="evidence" value="ECO:0000315"/>
    <property type="project" value="ARUK-UCL"/>
</dbReference>
<dbReference type="CDD" id="cd11504">
    <property type="entry name" value="SLC5sbd_SMVT"/>
    <property type="match status" value="1"/>
</dbReference>
<dbReference type="FunFam" id="1.20.1730.10:FF:000011">
    <property type="entry name" value="sodium-dependent multivitamin transporter isoform X1"/>
    <property type="match status" value="1"/>
</dbReference>
<dbReference type="Gene3D" id="1.20.1730.10">
    <property type="entry name" value="Sodium/glucose cotransporter"/>
    <property type="match status" value="1"/>
</dbReference>
<dbReference type="InterPro" id="IPR038377">
    <property type="entry name" value="Na/Glc_symporter_sf"/>
</dbReference>
<dbReference type="InterPro" id="IPR001734">
    <property type="entry name" value="Na/solute_symporter"/>
</dbReference>
<dbReference type="InterPro" id="IPR018212">
    <property type="entry name" value="Na/solute_symporter_CS"/>
</dbReference>
<dbReference type="InterPro" id="IPR051163">
    <property type="entry name" value="Sodium:Solute_Symporter_SSF"/>
</dbReference>
<dbReference type="NCBIfam" id="TIGR00813">
    <property type="entry name" value="sss"/>
    <property type="match status" value="1"/>
</dbReference>
<dbReference type="PANTHER" id="PTHR42985">
    <property type="entry name" value="SODIUM-COUPLED MONOCARBOXYLATE TRANSPORTER"/>
    <property type="match status" value="1"/>
</dbReference>
<dbReference type="PANTHER" id="PTHR42985:SF2">
    <property type="entry name" value="SODIUM-DEPENDENT MULTIVITAMIN TRANSPORTER"/>
    <property type="match status" value="1"/>
</dbReference>
<dbReference type="Pfam" id="PF00474">
    <property type="entry name" value="SSF"/>
    <property type="match status" value="1"/>
</dbReference>
<dbReference type="PROSITE" id="PS00456">
    <property type="entry name" value="NA_SOLUT_SYMP_1"/>
    <property type="match status" value="1"/>
</dbReference>
<dbReference type="PROSITE" id="PS50283">
    <property type="entry name" value="NA_SOLUT_SYMP_3"/>
    <property type="match status" value="1"/>
</dbReference>
<feature type="chain" id="PRO_0000105386" description="Sodium-dependent multivitamin transporter">
    <location>
        <begin position="1"/>
        <end position="635"/>
    </location>
</feature>
<feature type="transmembrane region" description="Helical" evidence="2">
    <location>
        <begin position="24"/>
        <end position="44"/>
    </location>
</feature>
<feature type="transmembrane region" description="Helical" evidence="2">
    <location>
        <begin position="68"/>
        <end position="88"/>
    </location>
</feature>
<feature type="transmembrane region" description="Helical" evidence="2">
    <location>
        <begin position="101"/>
        <end position="121"/>
    </location>
</feature>
<feature type="transmembrane region" description="Helical" evidence="2">
    <location>
        <begin position="143"/>
        <end position="163"/>
    </location>
</feature>
<feature type="transmembrane region" description="Helical" evidence="2">
    <location>
        <begin position="176"/>
        <end position="196"/>
    </location>
</feature>
<feature type="transmembrane region" description="Helical" evidence="2">
    <location>
        <begin position="199"/>
        <end position="219"/>
    </location>
</feature>
<feature type="transmembrane region" description="Helical" evidence="2">
    <location>
        <begin position="256"/>
        <end position="276"/>
    </location>
</feature>
<feature type="transmembrane region" description="Helical" evidence="2">
    <location>
        <begin position="297"/>
        <end position="317"/>
    </location>
</feature>
<feature type="transmembrane region" description="Helical" evidence="2">
    <location>
        <begin position="336"/>
        <end position="356"/>
    </location>
</feature>
<feature type="transmembrane region" description="Helical" evidence="2">
    <location>
        <begin position="396"/>
        <end position="416"/>
    </location>
</feature>
<feature type="transmembrane region" description="Helical" evidence="2">
    <location>
        <begin position="428"/>
        <end position="448"/>
    </location>
</feature>
<feature type="transmembrane region" description="Helical" evidence="2">
    <location>
        <begin position="456"/>
        <end position="476"/>
    </location>
</feature>
<feature type="transmembrane region" description="Helical" evidence="2">
    <location>
        <begin position="528"/>
        <end position="548"/>
    </location>
</feature>
<feature type="glycosylation site" description="N-linked (GlcNAc...) asparagine" evidence="2">
    <location>
        <position position="138"/>
    </location>
</feature>
<feature type="glycosylation site" description="N-linked (GlcNAc...) asparagine" evidence="2">
    <location>
        <position position="489"/>
    </location>
</feature>
<feature type="glycosylation site" description="N-linked (GlcNAc...) asparagine" evidence="2">
    <location>
        <position position="498"/>
    </location>
</feature>
<feature type="sequence variant" id="VAR_084535" description="In SMVTD and COMNB; reduced membrane localization; impaired biotin transport; dbSNP:rs994218778." evidence="14 17">
    <location>
        <begin position="94"/>
        <end position="635"/>
    </location>
</feature>
<feature type="sequence variant" id="VAR_084536" description="In SMVTD; reduced membrane localization; impaired biotin transport." evidence="14">
    <original>R</original>
    <variation>L</variation>
    <location>
        <position position="123"/>
    </location>
</feature>
<feature type="sequence variant" id="VAR_087446" description="In COMNB; no effect on membrane localization." evidence="17">
    <original>Y</original>
    <variation>C</variation>
    <location>
        <position position="162"/>
    </location>
</feature>
<feature type="sequence variant" id="VAR_084537" description="In SMVTD; impaired biotin transport; dbSNP:rs370950187." evidence="16">
    <original>R</original>
    <variation>T</variation>
    <location>
        <position position="400"/>
    </location>
</feature>
<feature type="sequence variant" id="VAR_087447" description="In COMNB; no effect on membrane localization." evidence="17">
    <original>S</original>
    <variation>G</variation>
    <location>
        <position position="429"/>
    </location>
</feature>
<feature type="sequence variant" id="VAR_052491" description="In dbSNP:rs1395." evidence="3 4 5 18">
    <original>S</original>
    <variation>F</variation>
    <location>
        <position position="481"/>
    </location>
</feature>
<feature type="sequence variant" id="VAR_052492" description="In dbSNP:rs1064845.">
    <original>S</original>
    <variation>N</variation>
    <location>
        <position position="492"/>
    </location>
</feature>
<feature type="mutagenesis site" description="No effect on biotin transport." evidence="11">
    <original>C</original>
    <variation>A</variation>
    <location>
        <position position="68"/>
    </location>
</feature>
<feature type="mutagenesis site" description="Reduced membrane localization. Decrease in biotin transport." evidence="15">
    <original>T</original>
    <variation>A</variation>
    <location>
        <position position="78"/>
    </location>
</feature>
<feature type="mutagenesis site" description="No effect on biotin transport." evidence="11">
    <original>C</original>
    <variation>A</variation>
    <location>
        <position position="104"/>
    </location>
</feature>
<feature type="mutagenesis site" description="No effect on biotin transport." evidence="15">
    <original>S</original>
    <variation>A</variation>
    <location>
        <position position="128"/>
    </location>
</feature>
<feature type="mutagenesis site" description="Reduced protein levels. Decrease in biotin transport." evidence="10">
    <original>N</original>
    <variation>A</variation>
    <location>
        <position position="138"/>
    </location>
</feature>
<feature type="mutagenesis site" description="No effect on biotin transport." evidence="11">
    <original>C</original>
    <variation>A</variation>
    <location>
        <position position="144"/>
    </location>
</feature>
<feature type="mutagenesis site" description="No effect on biotin transport." evidence="11">
    <original>C</original>
    <variation>A</variation>
    <location>
        <position position="187"/>
    </location>
</feature>
<feature type="mutagenesis site" description="No effect on biotin transport." evidence="15">
    <original>S</original>
    <variation>A</variation>
    <location>
        <position position="242"/>
    </location>
</feature>
<feature type="mutagenesis site" description="No effect on protein levels or membrane localization." evidence="10">
    <original>S</original>
    <variation>A</variation>
    <location>
        <position position="283"/>
    </location>
</feature>
<feature type="mutagenesis site" description="Resistant to phorbol 12-myristate 13-acetate (PMA)-induced inhibition of biotin transport. No effect on protein levels or membrane localization." evidence="10">
    <original>T</original>
    <variation>A</variation>
    <location>
        <position position="286"/>
    </location>
</feature>
<feature type="mutagenesis site" description="Reduced membrane localization. Decrease in biotin transport (decreased Vmax, no change in Km)." evidence="11">
    <original>C</original>
    <variation>A</variation>
    <location>
        <position position="294"/>
    </location>
</feature>
<feature type="mutagenesis site" description="Decrease in biotin transport." evidence="11">
    <original>C</original>
    <variation>S</variation>
    <variation>M</variation>
    <location>
        <position position="294"/>
    </location>
</feature>
<feature type="mutagenesis site" description="No effect on biotin transport." evidence="11">
    <original>C</original>
    <variation>A</variation>
    <location>
        <position position="309"/>
    </location>
</feature>
<feature type="mutagenesis site" description="No effect on biotin transport." evidence="11">
    <original>C</original>
    <variation>A</variation>
    <location>
        <position position="358"/>
    </location>
</feature>
<feature type="mutagenesis site" description="No effect on biotin transport." evidence="15">
    <original>T</original>
    <variation>A</variation>
    <location>
        <position position="366"/>
    </location>
</feature>
<feature type="mutagenesis site" description="No effect on biotin transport." evidence="11">
    <original>C</original>
    <variation>A</variation>
    <location>
        <position position="410"/>
    </location>
</feature>
<feature type="mutagenesis site" description="No effect on biotin transport." evidence="11">
    <original>C</original>
    <variation>A</variation>
    <location>
        <position position="443"/>
    </location>
</feature>
<feature type="mutagenesis site" description="No effect on biotin transport." evidence="11">
    <original>C</original>
    <variation>A</variation>
    <location>
        <position position="450"/>
    </location>
</feature>
<feature type="mutagenesis site" description="Slight decrease in protein levels. Decrease in biotin transport." evidence="10">
    <original>N</original>
    <variation>A</variation>
    <location>
        <position position="489"/>
    </location>
</feature>
<feature type="mutagenesis site" description="No effect on biotin transport." evidence="10">
    <original>N</original>
    <variation>A</variation>
    <location>
        <position position="498"/>
    </location>
</feature>
<feature type="mutagenesis site" description="No effect on biotin transport." evidence="10">
    <original>N</original>
    <variation>A</variation>
    <location>
        <position position="534"/>
    </location>
</feature>
<feature type="mutagenesis site" description="Loss of biotin transport. Loss of membrane localization." evidence="7">
    <location>
        <begin position="567"/>
        <end position="635"/>
    </location>
</feature>
<feature type="mutagenesis site" description="Loss of biotin transport. Loss of membrane localization." evidence="7">
    <location>
        <begin position="570"/>
        <end position="635"/>
    </location>
</feature>
<feature type="mutagenesis site" description="Partial loss (75%) of biotine transport. Apical membrane localization and intracellular structure localization in polarized cells." evidence="7">
    <location>
        <begin position="575"/>
        <end position="635"/>
    </location>
</feature>
<feature type="mutagenesis site" description="No effect on biotin transport." evidence="11">
    <original>C</original>
    <variation>A</variation>
    <location>
        <position position="577"/>
    </location>
</feature>
<feature type="mutagenesis site" description="No effect on biotin transport." evidence="11">
    <original>C</original>
    <variation>A</variation>
    <location>
        <position position="583"/>
    </location>
</feature>
<feature type="mutagenesis site" description="Partial loss (75%) of biotine transport. Apical membrane localization and intracellular structure localization in polarized cells." evidence="7">
    <location>
        <begin position="584"/>
        <end position="635"/>
    </location>
</feature>
<feature type="mutagenesis site" description="Partial loss (75%) of biotine transport. Apical membrane localization and intracellular structure localization in polarized cells." evidence="7">
    <location>
        <begin position="600"/>
        <end position="635"/>
    </location>
</feature>
<feature type="mutagenesis site" description="Partial loss (75%) of biotine transport. Apical membrane localization and intracellular structure localization in polarized cells." evidence="7">
    <location>
        <begin position="612"/>
        <end position="635"/>
    </location>
</feature>
<feature type="mutagenesis site" description="Loss of apical membrane localization in polarized cells. Basolateral localization in polarized cells." evidence="7">
    <location>
        <begin position="616"/>
        <end position="635"/>
    </location>
</feature>
<feature type="mutagenesis site" description="Partial loss (25%) of biotine transport. No change in apical membrane localization in polarized cells." evidence="7">
    <location>
        <begin position="620"/>
        <end position="635"/>
    </location>
</feature>
<feature type="mutagenesis site" description="Partial loss (25%) of biotine transport. No change in apical membrane localization in polarized cells." evidence="7">
    <location>
        <begin position="624"/>
        <end position="635"/>
    </location>
</feature>
<feature type="mutagenesis site" description="No effect on biotin transport." evidence="15">
    <original>T</original>
    <variation>A</variation>
    <location>
        <position position="627"/>
    </location>
</feature>
<feature type="mutagenesis site" description="Decrease in biotin transport." evidence="11">
    <original>C</original>
    <variation>A</variation>
    <variation>S</variation>
    <location>
        <position position="628"/>
    </location>
</feature>
<feature type="mutagenesis site" description="Partial loss (25%) of biotine transport. No change in apical membrane localization in polarized cells." evidence="7">
    <location>
        <begin position="632"/>
        <end position="635"/>
    </location>
</feature>
<reference key="1">
    <citation type="journal article" date="1999" name="J. Biol. Chem.">
        <title>Human placental Na+-dependent multivitamin transporter. Cloning, functional expression, gene structure, and chromosomal localization.</title>
        <authorList>
            <person name="Wang H."/>
            <person name="Huang W."/>
            <person name="Fei Y.-J."/>
            <person name="Xia H."/>
            <person name="Yang-Feng T.L."/>
            <person name="Leibach F.H."/>
            <person name="Devoe L.D."/>
            <person name="Ganapathy V."/>
            <person name="Prasad P.D."/>
        </authorList>
    </citation>
    <scope>NUCLEOTIDE SEQUENCE [GENOMIC DNA / MRNA]</scope>
    <scope>FUNCTION</scope>
    <scope>TRANSPORTER ACTIVITY</scope>
    <scope>TISSUE SPECIFICITY</scope>
    <scope>VARIANT PHE-481</scope>
    <source>
        <tissue>Intestine</tissue>
    </source>
</reference>
<reference key="2">
    <citation type="journal article" date="1999" name="Arch. Biochem. Biophys.">
        <title>Molecular and functional characterization of the intestinal Na+-dependent multivitamin transporter.</title>
        <authorList>
            <person name="Prasad P.D."/>
            <person name="Wang H."/>
            <person name="Huang W."/>
            <person name="Fei Y.-J."/>
            <person name="Leibach F.H."/>
            <person name="Devoe L.D."/>
            <person name="Ganapathy V."/>
        </authorList>
    </citation>
    <scope>NUCLEOTIDE SEQUENCE [MRNA]</scope>
    <scope>VARIANT PHE-481</scope>
    <source>
        <tissue>Intestine</tissue>
    </source>
</reference>
<reference key="3">
    <citation type="journal article" date="2004" name="Nat. Genet.">
        <title>Complete sequencing and characterization of 21,243 full-length human cDNAs.</title>
        <authorList>
            <person name="Ota T."/>
            <person name="Suzuki Y."/>
            <person name="Nishikawa T."/>
            <person name="Otsuki T."/>
            <person name="Sugiyama T."/>
            <person name="Irie R."/>
            <person name="Wakamatsu A."/>
            <person name="Hayashi K."/>
            <person name="Sato H."/>
            <person name="Nagai K."/>
            <person name="Kimura K."/>
            <person name="Makita H."/>
            <person name="Sekine M."/>
            <person name="Obayashi M."/>
            <person name="Nishi T."/>
            <person name="Shibahara T."/>
            <person name="Tanaka T."/>
            <person name="Ishii S."/>
            <person name="Yamamoto J."/>
            <person name="Saito K."/>
            <person name="Kawai Y."/>
            <person name="Isono Y."/>
            <person name="Nakamura Y."/>
            <person name="Nagahari K."/>
            <person name="Murakami K."/>
            <person name="Yasuda T."/>
            <person name="Iwayanagi T."/>
            <person name="Wagatsuma M."/>
            <person name="Shiratori A."/>
            <person name="Sudo H."/>
            <person name="Hosoiri T."/>
            <person name="Kaku Y."/>
            <person name="Kodaira H."/>
            <person name="Kondo H."/>
            <person name="Sugawara M."/>
            <person name="Takahashi M."/>
            <person name="Kanda K."/>
            <person name="Yokoi T."/>
            <person name="Furuya T."/>
            <person name="Kikkawa E."/>
            <person name="Omura Y."/>
            <person name="Abe K."/>
            <person name="Kamihara K."/>
            <person name="Katsuta N."/>
            <person name="Sato K."/>
            <person name="Tanikawa M."/>
            <person name="Yamazaki M."/>
            <person name="Ninomiya K."/>
            <person name="Ishibashi T."/>
            <person name="Yamashita H."/>
            <person name="Murakawa K."/>
            <person name="Fujimori K."/>
            <person name="Tanai H."/>
            <person name="Kimata M."/>
            <person name="Watanabe M."/>
            <person name="Hiraoka S."/>
            <person name="Chiba Y."/>
            <person name="Ishida S."/>
            <person name="Ono Y."/>
            <person name="Takiguchi S."/>
            <person name="Watanabe S."/>
            <person name="Yosida M."/>
            <person name="Hotuta T."/>
            <person name="Kusano J."/>
            <person name="Kanehori K."/>
            <person name="Takahashi-Fujii A."/>
            <person name="Hara H."/>
            <person name="Tanase T.-O."/>
            <person name="Nomura Y."/>
            <person name="Togiya S."/>
            <person name="Komai F."/>
            <person name="Hara R."/>
            <person name="Takeuchi K."/>
            <person name="Arita M."/>
            <person name="Imose N."/>
            <person name="Musashino K."/>
            <person name="Yuuki H."/>
            <person name="Oshima A."/>
            <person name="Sasaki N."/>
            <person name="Aotsuka S."/>
            <person name="Yoshikawa Y."/>
            <person name="Matsunawa H."/>
            <person name="Ichihara T."/>
            <person name="Shiohata N."/>
            <person name="Sano S."/>
            <person name="Moriya S."/>
            <person name="Momiyama H."/>
            <person name="Satoh N."/>
            <person name="Takami S."/>
            <person name="Terashima Y."/>
            <person name="Suzuki O."/>
            <person name="Nakagawa S."/>
            <person name="Senoh A."/>
            <person name="Mizoguchi H."/>
            <person name="Goto Y."/>
            <person name="Shimizu F."/>
            <person name="Wakebe H."/>
            <person name="Hishigaki H."/>
            <person name="Watanabe T."/>
            <person name="Sugiyama A."/>
            <person name="Takemoto M."/>
            <person name="Kawakami B."/>
            <person name="Yamazaki M."/>
            <person name="Watanabe K."/>
            <person name="Kumagai A."/>
            <person name="Itakura S."/>
            <person name="Fukuzumi Y."/>
            <person name="Fujimori Y."/>
            <person name="Komiyama M."/>
            <person name="Tashiro H."/>
            <person name="Tanigami A."/>
            <person name="Fujiwara T."/>
            <person name="Ono T."/>
            <person name="Yamada K."/>
            <person name="Fujii Y."/>
            <person name="Ozaki K."/>
            <person name="Hirao M."/>
            <person name="Ohmori Y."/>
            <person name="Kawabata A."/>
            <person name="Hikiji T."/>
            <person name="Kobatake N."/>
            <person name="Inagaki H."/>
            <person name="Ikema Y."/>
            <person name="Okamoto S."/>
            <person name="Okitani R."/>
            <person name="Kawakami T."/>
            <person name="Noguchi S."/>
            <person name="Itoh T."/>
            <person name="Shigeta K."/>
            <person name="Senba T."/>
            <person name="Matsumura K."/>
            <person name="Nakajima Y."/>
            <person name="Mizuno T."/>
            <person name="Morinaga M."/>
            <person name="Sasaki M."/>
            <person name="Togashi T."/>
            <person name="Oyama M."/>
            <person name="Hata H."/>
            <person name="Watanabe M."/>
            <person name="Komatsu T."/>
            <person name="Mizushima-Sugano J."/>
            <person name="Satoh T."/>
            <person name="Shirai Y."/>
            <person name="Takahashi Y."/>
            <person name="Nakagawa K."/>
            <person name="Okumura K."/>
            <person name="Nagase T."/>
            <person name="Nomura N."/>
            <person name="Kikuchi H."/>
            <person name="Masuho Y."/>
            <person name="Yamashita R."/>
            <person name="Nakai K."/>
            <person name="Yada T."/>
            <person name="Nakamura Y."/>
            <person name="Ohara O."/>
            <person name="Isogai T."/>
            <person name="Sugano S."/>
        </authorList>
    </citation>
    <scope>NUCLEOTIDE SEQUENCE [LARGE SCALE MRNA]</scope>
    <scope>VARIANT PHE-481</scope>
    <source>
        <tissue>Placenta</tissue>
    </source>
</reference>
<reference key="4">
    <citation type="journal article" date="2005" name="Nature">
        <title>Generation and annotation of the DNA sequences of human chromosomes 2 and 4.</title>
        <authorList>
            <person name="Hillier L.W."/>
            <person name="Graves T.A."/>
            <person name="Fulton R.S."/>
            <person name="Fulton L.A."/>
            <person name="Pepin K.H."/>
            <person name="Minx P."/>
            <person name="Wagner-McPherson C."/>
            <person name="Layman D."/>
            <person name="Wylie K."/>
            <person name="Sekhon M."/>
            <person name="Becker M.C."/>
            <person name="Fewell G.A."/>
            <person name="Delehaunty K.D."/>
            <person name="Miner T.L."/>
            <person name="Nash W.E."/>
            <person name="Kremitzki C."/>
            <person name="Oddy L."/>
            <person name="Du H."/>
            <person name="Sun H."/>
            <person name="Bradshaw-Cordum H."/>
            <person name="Ali J."/>
            <person name="Carter J."/>
            <person name="Cordes M."/>
            <person name="Harris A."/>
            <person name="Isak A."/>
            <person name="van Brunt A."/>
            <person name="Nguyen C."/>
            <person name="Du F."/>
            <person name="Courtney L."/>
            <person name="Kalicki J."/>
            <person name="Ozersky P."/>
            <person name="Abbott S."/>
            <person name="Armstrong J."/>
            <person name="Belter E.A."/>
            <person name="Caruso L."/>
            <person name="Cedroni M."/>
            <person name="Cotton M."/>
            <person name="Davidson T."/>
            <person name="Desai A."/>
            <person name="Elliott G."/>
            <person name="Erb T."/>
            <person name="Fronick C."/>
            <person name="Gaige T."/>
            <person name="Haakenson W."/>
            <person name="Haglund K."/>
            <person name="Holmes A."/>
            <person name="Harkins R."/>
            <person name="Kim K."/>
            <person name="Kruchowski S.S."/>
            <person name="Strong C.M."/>
            <person name="Grewal N."/>
            <person name="Goyea E."/>
            <person name="Hou S."/>
            <person name="Levy A."/>
            <person name="Martinka S."/>
            <person name="Mead K."/>
            <person name="McLellan M.D."/>
            <person name="Meyer R."/>
            <person name="Randall-Maher J."/>
            <person name="Tomlinson C."/>
            <person name="Dauphin-Kohlberg S."/>
            <person name="Kozlowicz-Reilly A."/>
            <person name="Shah N."/>
            <person name="Swearengen-Shahid S."/>
            <person name="Snider J."/>
            <person name="Strong J.T."/>
            <person name="Thompson J."/>
            <person name="Yoakum M."/>
            <person name="Leonard S."/>
            <person name="Pearman C."/>
            <person name="Trani L."/>
            <person name="Radionenko M."/>
            <person name="Waligorski J.E."/>
            <person name="Wang C."/>
            <person name="Rock S.M."/>
            <person name="Tin-Wollam A.-M."/>
            <person name="Maupin R."/>
            <person name="Latreille P."/>
            <person name="Wendl M.C."/>
            <person name="Yang S.-P."/>
            <person name="Pohl C."/>
            <person name="Wallis J.W."/>
            <person name="Spieth J."/>
            <person name="Bieri T.A."/>
            <person name="Berkowicz N."/>
            <person name="Nelson J.O."/>
            <person name="Osborne J."/>
            <person name="Ding L."/>
            <person name="Meyer R."/>
            <person name="Sabo A."/>
            <person name="Shotland Y."/>
            <person name="Sinha P."/>
            <person name="Wohldmann P.E."/>
            <person name="Cook L.L."/>
            <person name="Hickenbotham M.T."/>
            <person name="Eldred J."/>
            <person name="Williams D."/>
            <person name="Jones T.A."/>
            <person name="She X."/>
            <person name="Ciccarelli F.D."/>
            <person name="Izaurralde E."/>
            <person name="Taylor J."/>
            <person name="Schmutz J."/>
            <person name="Myers R.M."/>
            <person name="Cox D.R."/>
            <person name="Huang X."/>
            <person name="McPherson J.D."/>
            <person name="Mardis E.R."/>
            <person name="Clifton S.W."/>
            <person name="Warren W.C."/>
            <person name="Chinwalla A.T."/>
            <person name="Eddy S.R."/>
            <person name="Marra M.A."/>
            <person name="Ovcharenko I."/>
            <person name="Furey T.S."/>
            <person name="Miller W."/>
            <person name="Eichler E.E."/>
            <person name="Bork P."/>
            <person name="Suyama M."/>
            <person name="Torrents D."/>
            <person name="Waterston R.H."/>
            <person name="Wilson R.K."/>
        </authorList>
    </citation>
    <scope>NUCLEOTIDE SEQUENCE [LARGE SCALE GENOMIC DNA]</scope>
</reference>
<reference key="5">
    <citation type="submission" date="2005-09" db="EMBL/GenBank/DDBJ databases">
        <authorList>
            <person name="Mural R.J."/>
            <person name="Istrail S."/>
            <person name="Sutton G.G."/>
            <person name="Florea L."/>
            <person name="Halpern A.L."/>
            <person name="Mobarry C.M."/>
            <person name="Lippert R."/>
            <person name="Walenz B."/>
            <person name="Shatkay H."/>
            <person name="Dew I."/>
            <person name="Miller J.R."/>
            <person name="Flanigan M.J."/>
            <person name="Edwards N.J."/>
            <person name="Bolanos R."/>
            <person name="Fasulo D."/>
            <person name="Halldorsson B.V."/>
            <person name="Hannenhalli S."/>
            <person name="Turner R."/>
            <person name="Yooseph S."/>
            <person name="Lu F."/>
            <person name="Nusskern D.R."/>
            <person name="Shue B.C."/>
            <person name="Zheng X.H."/>
            <person name="Zhong F."/>
            <person name="Delcher A.L."/>
            <person name="Huson D.H."/>
            <person name="Kravitz S.A."/>
            <person name="Mouchard L."/>
            <person name="Reinert K."/>
            <person name="Remington K.A."/>
            <person name="Clark A.G."/>
            <person name="Waterman M.S."/>
            <person name="Eichler E.E."/>
            <person name="Adams M.D."/>
            <person name="Hunkapiller M.W."/>
            <person name="Myers E.W."/>
            <person name="Venter J.C."/>
        </authorList>
    </citation>
    <scope>NUCLEOTIDE SEQUENCE [LARGE SCALE GENOMIC DNA]</scope>
    <scope>VARIANT PHE-481</scope>
</reference>
<reference key="6">
    <citation type="journal article" date="2004" name="Genome Res.">
        <title>The status, quality, and expansion of the NIH full-length cDNA project: the Mammalian Gene Collection (MGC).</title>
        <authorList>
            <consortium name="The MGC Project Team"/>
        </authorList>
    </citation>
    <scope>NUCLEOTIDE SEQUENCE [LARGE SCALE MRNA]</scope>
    <source>
        <tissue>Brain</tissue>
    </source>
</reference>
<reference key="7">
    <citation type="journal article" date="2005" name="Am. J. Physiol.">
        <title>Biotin uptake by human proximal tubular epithelial cells: cellular and molecular aspects.</title>
        <authorList>
            <person name="Balamurugan K."/>
            <person name="Vaziri N.D."/>
            <person name="Said H.M."/>
        </authorList>
    </citation>
    <scope>FUNCTION</scope>
    <scope>TRANPORTER ACTIVITY</scope>
</reference>
<reference key="8">
    <citation type="journal article" date="2009" name="Am. J. Physiol.">
        <title>Membrane targeting and intracellular trafficking of the human sodium-dependent multivitamin transporter in polarized epithelial cells.</title>
        <authorList>
            <person name="Subramanian V.S."/>
            <person name="Marchant J.S."/>
            <person name="Boulware M.J."/>
            <person name="Ma T.Y."/>
            <person name="Said H.M."/>
        </authorList>
    </citation>
    <scope>FUNCTION</scope>
    <scope>TRANSPORTER ACTIVITY</scope>
    <scope>SUBCELLULAR LOCATION</scope>
    <scope>DOMAIN</scope>
    <scope>MUTAGENESIS OF 567-PRO--LEU-635; 570-LEU--LEU-635; 575-LEU--LEU-635; 584-ARG--LEU-635; 600-PRO--LEU-635; 612-GLU--LEU-635; 616-LEU--LEU-635; 620-ALA--LEU-635; 624-SER--LEU-635 AND 632-GLU--LEU-635</scope>
</reference>
<reference key="9">
    <citation type="journal article" date="2011" name="Am. J. Physiol.">
        <title>Association of PDZ-containing protein PDZD11 with the human sodium-dependent multivitamin transporter.</title>
        <authorList>
            <person name="Nabokina S.M."/>
            <person name="Subramanian V.S."/>
            <person name="Said H.M."/>
        </authorList>
    </citation>
    <scope>INTERACTION WITH PDZD11</scope>
</reference>
<reference key="10">
    <citation type="journal article" date="2011" name="Biochim. Biophys. Acta">
        <title>Role of the putative N-glycosylation and PKC-phosphorylation sites of the human sodium-dependent multivitamin transporter (hSMVT) in function and regulation.</title>
        <authorList>
            <person name="Ghosal A."/>
            <person name="Subramanian V.S."/>
            <person name="Said H.M."/>
        </authorList>
    </citation>
    <scope>FUNCTION</scope>
    <scope>TRANSPORTER ACTIVITY</scope>
    <scope>BIOPHYSICOCHEMICAL PROPERTIES</scope>
    <scope>GLYCOSYLATION</scope>
    <scope>MUTAGENESIS OF ASN-138; SER-283; THR-286; ASN-489; ASN-498 AND ASN-534</scope>
</reference>
<reference key="11">
    <citation type="journal article" date="2011" name="J. Biol. Chem.">
        <title>Surprising substrate versatility in SLC5A6: Na+-coupled I- transport by the human Na+/multivitamin transporter (hSMVT).</title>
        <authorList>
            <person name="de Carvalho F.D."/>
            <person name="Quick M."/>
        </authorList>
    </citation>
    <scope>FUNCTION</scope>
    <scope>TRANPORTER ACTIVITY</scope>
</reference>
<reference key="12">
    <citation type="journal article" date="2012" name="Biochim. Biophys. Acta">
        <title>Cys(294) is essential for the function of the human sodium-dependent multivitamin transporter.</title>
        <authorList>
            <person name="Ghosal A."/>
            <person name="Said H.M."/>
        </authorList>
    </citation>
    <scope>FUNCTION</scope>
    <scope>TRANSPORTER ACTIVITY</scope>
    <scope>BIOPHYSICOCHEMICAL PROPERTIES</scope>
    <scope>MUTAGENESIS OF CYS-68; CYS-104; CYS-144; CYS-187; CYS-294; CYS-309; CYS-358; CYS-410; CYS-443; CYS-450; CYS-577; CYS-583 AND CYS-628</scope>
</reference>
<reference key="13">
    <citation type="journal article" date="2015" name="J. Biol. Chem.">
        <title>Interaction of alpha-Lipoic Acid with the Human Na+/Multivitamin Transporter (hSMVT).</title>
        <authorList>
            <person name="Zehnpfennig B."/>
            <person name="Wiriyasermkul P."/>
            <person name="Carlson D.A."/>
            <person name="Quick M."/>
        </authorList>
    </citation>
    <scope>FUNCTION</scope>
    <scope>TRANSPORTER ACTIVITY</scope>
    <scope>BIOPHYSICOCHEMICAL PROPERTIES</scope>
</reference>
<reference key="14">
    <citation type="journal article" date="2015" name="J. Neurochem.">
        <title>Major involvement of Na(+) -dependent multivitamin transporter (SLC5A6/SMVT) in uptake of biotin and pantothenic acid by human brain capillary endothelial cells.</title>
        <authorList>
            <person name="Uchida Y."/>
            <person name="Ito K."/>
            <person name="Ohtsuki S."/>
            <person name="Kubo Y."/>
            <person name="Suzuki T."/>
            <person name="Terasaki T."/>
        </authorList>
    </citation>
    <scope>FUNCTION</scope>
    <scope>TRANSPORTER ACTIVITY</scope>
    <scope>SUBCELLULAR LOCATION</scope>
    <scope>TISSUE SPECIFICITY</scope>
</reference>
<reference key="15">
    <citation type="journal article" date="2017" name="Am. J. Physiol.">
        <title>Lipopolysaccharide inhibits colonic biotin uptake via interference with membrane expression of its transporter: a role for a casein kinase 2-mediated pathway.</title>
        <authorList>
            <person name="Lakhan R."/>
            <person name="Said H.M."/>
        </authorList>
    </citation>
    <scope>FUNCTION</scope>
    <scope>TRANSPORTER ACTIVITY</scope>
    <scope>SUBCELLULAR LOCATION (MICROBIAL INFECTION)</scope>
    <scope>MUTAGENESIS OF THR-78; SER-128; SER-242; THR-366 AND THR-627</scope>
</reference>
<reference key="16">
    <citation type="journal article" date="2017" name="Hum. Genet.">
        <title>Mutations in SLC5A6 associated with brain, immune, bone, and intestinal dysfunction in a young child.</title>
        <authorList>
            <person name="Subramanian V.S."/>
            <person name="Constantinescu A.R."/>
            <person name="Benke P.J."/>
            <person name="Said H.M."/>
        </authorList>
    </citation>
    <scope>INVOLVEMENT IN SMVTD</scope>
    <scope>VARIANTS SMVTD 94-ARG--LEU-635 DEL AND LEU-123</scope>
    <scope>CHARACTERIZATION OF VARIANTS SMVTD 94-ARG--LEU-635 DEL AND LEU-123</scope>
    <scope>FUNCTION</scope>
    <scope>TRANSPORTER ACTIVITY</scope>
    <scope>SUBCELLULAR LOCATION</scope>
</reference>
<reference key="17">
    <citation type="journal article" date="2019" name="NPJ Genom. Med.">
        <title>Identification and targeted management of a neurodegenerative disorder caused by biallelic mutations in SLC5A6.</title>
        <authorList>
            <person name="Byrne A.B."/>
            <person name="Arts P."/>
            <person name="Polyak S.W."/>
            <person name="Feng J."/>
            <person name="Schreiber A.W."/>
            <person name="Kassahn K.S."/>
            <person name="Hahn C.N."/>
            <person name="Mordaunt D.A."/>
            <person name="Fletcher J.M."/>
            <person name="Lipsett J."/>
            <person name="Bratkovic D."/>
            <person name="Booker G.W."/>
            <person name="Smith N.J."/>
            <person name="Scott H.S."/>
        </authorList>
    </citation>
    <scope>VARIANT SMVTD THR-400</scope>
    <scope>FUNCTION</scope>
</reference>
<reference key="18">
    <citation type="journal article" date="2022" name="Eur. J. Hum. Genet.">
        <title>Novel biallelic variants expand the SLC5A6-related phenotypic spectrum.</title>
        <authorList>
            <person name="Holling T."/>
            <person name="Nampoothiri S."/>
            <person name="Tarhan B."/>
            <person name="Schneeberger P.E."/>
            <person name="Vinayan K.P."/>
            <person name="Yesodharan D."/>
            <person name="Roy A.G."/>
            <person name="Radhakrishnan P."/>
            <person name="Alawi M."/>
            <person name="Rhodes L."/>
            <person name="Girisha K.M."/>
            <person name="Kang P.B."/>
            <person name="Kutsche K."/>
        </authorList>
    </citation>
    <scope>VARIANTS COMNB 94-ARG--LEU-635 DEL; CYS-162 AND GLY-429</scope>
    <scope>CHARACTERIZATION OF VARIANTS COMNB CYS-162 AND GLY-429</scope>
    <scope>INVOLVEMENT IN COMNB</scope>
    <scope>SUBCELLULAR LOCATION</scope>
</reference>
<organism>
    <name type="scientific">Homo sapiens</name>
    <name type="common">Human</name>
    <dbReference type="NCBI Taxonomy" id="9606"/>
    <lineage>
        <taxon>Eukaryota</taxon>
        <taxon>Metazoa</taxon>
        <taxon>Chordata</taxon>
        <taxon>Craniata</taxon>
        <taxon>Vertebrata</taxon>
        <taxon>Euteleostomi</taxon>
        <taxon>Mammalia</taxon>
        <taxon>Eutheria</taxon>
        <taxon>Euarchontoglires</taxon>
        <taxon>Primates</taxon>
        <taxon>Haplorrhini</taxon>
        <taxon>Catarrhini</taxon>
        <taxon>Hominidae</taxon>
        <taxon>Homo</taxon>
    </lineage>
</organism>
<keyword id="KW-0092">Biotin</keyword>
<keyword id="KW-1003">Cell membrane</keyword>
<keyword id="KW-0225">Disease variant</keyword>
<keyword id="KW-0325">Glycoprotein</keyword>
<keyword id="KW-0406">Ion transport</keyword>
<keyword id="KW-0472">Membrane</keyword>
<keyword id="KW-0523">Neurodegeneration</keyword>
<keyword id="KW-0622">Neuropathy</keyword>
<keyword id="KW-1267">Proteomics identification</keyword>
<keyword id="KW-1185">Reference proteome</keyword>
<keyword id="KW-0915">Sodium</keyword>
<keyword id="KW-0739">Sodium transport</keyword>
<keyword id="KW-0769">Symport</keyword>
<keyword id="KW-0812">Transmembrane</keyword>
<keyword id="KW-1133">Transmembrane helix</keyword>
<keyword id="KW-0813">Transport</keyword>
<evidence type="ECO:0000250" key="1">
    <source>
        <dbReference type="UniProtKB" id="Q5U4D8"/>
    </source>
</evidence>
<evidence type="ECO:0000255" key="2"/>
<evidence type="ECO:0000269" key="3">
    <source>
    </source>
</evidence>
<evidence type="ECO:0000269" key="4">
    <source>
    </source>
</evidence>
<evidence type="ECO:0000269" key="5">
    <source>
    </source>
</evidence>
<evidence type="ECO:0000269" key="6">
    <source>
    </source>
</evidence>
<evidence type="ECO:0000269" key="7">
    <source>
    </source>
</evidence>
<evidence type="ECO:0000269" key="8">
    <source>
    </source>
</evidence>
<evidence type="ECO:0000269" key="9">
    <source>
    </source>
</evidence>
<evidence type="ECO:0000269" key="10">
    <source>
    </source>
</evidence>
<evidence type="ECO:0000269" key="11">
    <source>
    </source>
</evidence>
<evidence type="ECO:0000269" key="12">
    <source>
    </source>
</evidence>
<evidence type="ECO:0000269" key="13">
    <source>
    </source>
</evidence>
<evidence type="ECO:0000269" key="14">
    <source>
    </source>
</evidence>
<evidence type="ECO:0000269" key="15">
    <source>
    </source>
</evidence>
<evidence type="ECO:0000269" key="16">
    <source>
    </source>
</evidence>
<evidence type="ECO:0000269" key="17">
    <source>
    </source>
</evidence>
<evidence type="ECO:0000269" key="18">
    <source ref="5"/>
</evidence>
<evidence type="ECO:0000303" key="19">
    <source>
    </source>
</evidence>
<evidence type="ECO:0000303" key="20">
    <source>
    </source>
</evidence>
<evidence type="ECO:0000303" key="21">
    <source>
    </source>
</evidence>
<evidence type="ECO:0000305" key="22"/>
<evidence type="ECO:0000312" key="23">
    <source>
        <dbReference type="HGNC" id="HGNC:11041"/>
    </source>
</evidence>